<organism>
    <name type="scientific">Salmonella choleraesuis (strain SC-B67)</name>
    <dbReference type="NCBI Taxonomy" id="321314"/>
    <lineage>
        <taxon>Bacteria</taxon>
        <taxon>Pseudomonadati</taxon>
        <taxon>Pseudomonadota</taxon>
        <taxon>Gammaproteobacteria</taxon>
        <taxon>Enterobacterales</taxon>
        <taxon>Enterobacteriaceae</taxon>
        <taxon>Salmonella</taxon>
    </lineage>
</organism>
<evidence type="ECO:0000255" key="1">
    <source>
        <dbReference type="HAMAP-Rule" id="MF_00036"/>
    </source>
</evidence>
<sequence length="876" mass="95913">MSKSTAEIRQAFLDFFHSKGHQVVSSSSLVPNNDPTLLFTNAGMNQFKDVFLGLDKRNYSRATTSQRCVRAGGKHNDLENVGYTARHHTFFEMLGNFSFGDYFKHDAIQFAWELLTGENWFALPKERLWVTVYETDDEAYEIWEKEVGIPRERIIRIGDNKGAPYASDNFWQMGDTGPCGPCTEIFYDHGDHIWGGPPGSPEEDGDRYIEIWNIVFMQFNRQADGAMEPLPKPSVDTGMGLERIAAVLQHVNSNYDIDLFRTLIEAVAKVTGATDLGNKSLRVIADHIRSCAFLVADGVLPSNENRGYVLRRIIRRAVRHGNMLGAKETFFYKLVGPLIEVMGSAGEELKRQQAQVEQVLKTEEEQFARTLERGLALLDEELAKLQGDTLDGETAFRLYDTYGFPVDLTADVCRERNIKVDEAGFEAAMEEQRRRAREASGFGADYNAMIRVDSASEFKGYDHLELNGKVTALFVDGKAVEVINAGQEAVVVLDQTPFYAESGGQVGDKGELKGAGFTFAVDDTQKYGQAIGHLGKLSAGALKVGDAVQADVDEARRARIRLNHSATHLMHAALRQVLGTHVAQKGSLVSDKVLRFDFSHNEAMKPSEIREVEDLVNAQIRRNLPIETNIMDLDAAKAKGAMALFGEKYDERVRVLSMGDFSTELCGGTHASRTGDIGLFRIISESGTAAGIRRIEAVTGEGAMATVHAQSDRLNDIAHLLKGDSQNLGDKVRAVLERTRQLEKELQQLKDQAAAQESANLSSKAVDLNGVKLLVSELAGIEPKMLRTMVDDLKNQLGSTVIVLATVVEGKVSLIAGVSKDVTDRVKAGELIGMVAQQVGGKGGGRPDMAQAGGTDAAALPAALASVQGWVSAKLQ</sequence>
<name>SYA_SALCH</name>
<protein>
    <recommendedName>
        <fullName evidence="1">Alanine--tRNA ligase</fullName>
        <ecNumber evidence="1">6.1.1.7</ecNumber>
    </recommendedName>
    <alternativeName>
        <fullName evidence="1">Alanyl-tRNA synthetase</fullName>
        <shortName evidence="1">AlaRS</shortName>
    </alternativeName>
</protein>
<reference key="1">
    <citation type="journal article" date="2005" name="Nucleic Acids Res.">
        <title>The genome sequence of Salmonella enterica serovar Choleraesuis, a highly invasive and resistant zoonotic pathogen.</title>
        <authorList>
            <person name="Chiu C.-H."/>
            <person name="Tang P."/>
            <person name="Chu C."/>
            <person name="Hu S."/>
            <person name="Bao Q."/>
            <person name="Yu J."/>
            <person name="Chou Y.-Y."/>
            <person name="Wang H.-S."/>
            <person name="Lee Y.-S."/>
        </authorList>
    </citation>
    <scope>NUCLEOTIDE SEQUENCE [LARGE SCALE GENOMIC DNA]</scope>
    <source>
        <strain>SC-B67</strain>
    </source>
</reference>
<dbReference type="EC" id="6.1.1.7" evidence="1"/>
<dbReference type="EMBL" id="AE017220">
    <property type="protein sequence ID" value="AAX66666.1"/>
    <property type="molecule type" value="Genomic_DNA"/>
</dbReference>
<dbReference type="RefSeq" id="WP_001540761.1">
    <property type="nucleotide sequence ID" value="NC_006905.1"/>
</dbReference>
<dbReference type="SMR" id="Q57KU6"/>
<dbReference type="KEGG" id="sec:SCH_2760"/>
<dbReference type="HOGENOM" id="CLU_004485_1_1_6"/>
<dbReference type="Proteomes" id="UP000000538">
    <property type="component" value="Chromosome"/>
</dbReference>
<dbReference type="GO" id="GO:0005829">
    <property type="term" value="C:cytosol"/>
    <property type="evidence" value="ECO:0007669"/>
    <property type="project" value="TreeGrafter"/>
</dbReference>
<dbReference type="GO" id="GO:0004813">
    <property type="term" value="F:alanine-tRNA ligase activity"/>
    <property type="evidence" value="ECO:0007669"/>
    <property type="project" value="UniProtKB-UniRule"/>
</dbReference>
<dbReference type="GO" id="GO:0002161">
    <property type="term" value="F:aminoacyl-tRNA deacylase activity"/>
    <property type="evidence" value="ECO:0007669"/>
    <property type="project" value="TreeGrafter"/>
</dbReference>
<dbReference type="GO" id="GO:0005524">
    <property type="term" value="F:ATP binding"/>
    <property type="evidence" value="ECO:0007669"/>
    <property type="project" value="UniProtKB-UniRule"/>
</dbReference>
<dbReference type="GO" id="GO:0000049">
    <property type="term" value="F:tRNA binding"/>
    <property type="evidence" value="ECO:0007669"/>
    <property type="project" value="UniProtKB-KW"/>
</dbReference>
<dbReference type="GO" id="GO:0008270">
    <property type="term" value="F:zinc ion binding"/>
    <property type="evidence" value="ECO:0007669"/>
    <property type="project" value="UniProtKB-UniRule"/>
</dbReference>
<dbReference type="GO" id="GO:0006419">
    <property type="term" value="P:alanyl-tRNA aminoacylation"/>
    <property type="evidence" value="ECO:0007669"/>
    <property type="project" value="UniProtKB-UniRule"/>
</dbReference>
<dbReference type="GO" id="GO:0045892">
    <property type="term" value="P:negative regulation of DNA-templated transcription"/>
    <property type="evidence" value="ECO:0007669"/>
    <property type="project" value="TreeGrafter"/>
</dbReference>
<dbReference type="CDD" id="cd00673">
    <property type="entry name" value="AlaRS_core"/>
    <property type="match status" value="1"/>
</dbReference>
<dbReference type="FunFam" id="2.40.30.130:FF:000001">
    <property type="entry name" value="Alanine--tRNA ligase"/>
    <property type="match status" value="1"/>
</dbReference>
<dbReference type="FunFam" id="3.10.310.40:FF:000001">
    <property type="entry name" value="Alanine--tRNA ligase"/>
    <property type="match status" value="1"/>
</dbReference>
<dbReference type="FunFam" id="3.30.54.20:FF:000001">
    <property type="entry name" value="Alanine--tRNA ligase"/>
    <property type="match status" value="1"/>
</dbReference>
<dbReference type="FunFam" id="3.30.930.10:FF:000004">
    <property type="entry name" value="Alanine--tRNA ligase"/>
    <property type="match status" value="1"/>
</dbReference>
<dbReference type="FunFam" id="3.30.980.10:FF:000004">
    <property type="entry name" value="Alanine--tRNA ligase, cytoplasmic"/>
    <property type="match status" value="1"/>
</dbReference>
<dbReference type="Gene3D" id="2.40.30.130">
    <property type="match status" value="1"/>
</dbReference>
<dbReference type="Gene3D" id="3.10.310.40">
    <property type="match status" value="1"/>
</dbReference>
<dbReference type="Gene3D" id="3.30.54.20">
    <property type="match status" value="1"/>
</dbReference>
<dbReference type="Gene3D" id="6.10.250.550">
    <property type="match status" value="1"/>
</dbReference>
<dbReference type="Gene3D" id="3.30.930.10">
    <property type="entry name" value="Bira Bifunctional Protein, Domain 2"/>
    <property type="match status" value="1"/>
</dbReference>
<dbReference type="Gene3D" id="3.30.980.10">
    <property type="entry name" value="Threonyl-trna Synthetase, Chain A, domain 2"/>
    <property type="match status" value="1"/>
</dbReference>
<dbReference type="HAMAP" id="MF_00036_B">
    <property type="entry name" value="Ala_tRNA_synth_B"/>
    <property type="match status" value="1"/>
</dbReference>
<dbReference type="InterPro" id="IPR045864">
    <property type="entry name" value="aa-tRNA-synth_II/BPL/LPL"/>
</dbReference>
<dbReference type="InterPro" id="IPR002318">
    <property type="entry name" value="Ala-tRNA-lgiase_IIc"/>
</dbReference>
<dbReference type="InterPro" id="IPR018162">
    <property type="entry name" value="Ala-tRNA-ligase_IIc_anticod-bd"/>
</dbReference>
<dbReference type="InterPro" id="IPR018165">
    <property type="entry name" value="Ala-tRNA-synth_IIc_core"/>
</dbReference>
<dbReference type="InterPro" id="IPR018164">
    <property type="entry name" value="Ala-tRNA-synth_IIc_N"/>
</dbReference>
<dbReference type="InterPro" id="IPR050058">
    <property type="entry name" value="Ala-tRNA_ligase"/>
</dbReference>
<dbReference type="InterPro" id="IPR023033">
    <property type="entry name" value="Ala_tRNA_ligase_euk/bac"/>
</dbReference>
<dbReference type="InterPro" id="IPR003156">
    <property type="entry name" value="DHHA1_dom"/>
</dbReference>
<dbReference type="InterPro" id="IPR018163">
    <property type="entry name" value="Thr/Ala-tRNA-synth_IIc_edit"/>
</dbReference>
<dbReference type="InterPro" id="IPR009000">
    <property type="entry name" value="Transl_B-barrel_sf"/>
</dbReference>
<dbReference type="InterPro" id="IPR012947">
    <property type="entry name" value="tRNA_SAD"/>
</dbReference>
<dbReference type="NCBIfam" id="TIGR00344">
    <property type="entry name" value="alaS"/>
    <property type="match status" value="1"/>
</dbReference>
<dbReference type="PANTHER" id="PTHR11777:SF9">
    <property type="entry name" value="ALANINE--TRNA LIGASE, CYTOPLASMIC"/>
    <property type="match status" value="1"/>
</dbReference>
<dbReference type="PANTHER" id="PTHR11777">
    <property type="entry name" value="ALANYL-TRNA SYNTHETASE"/>
    <property type="match status" value="1"/>
</dbReference>
<dbReference type="Pfam" id="PF02272">
    <property type="entry name" value="DHHA1"/>
    <property type="match status" value="1"/>
</dbReference>
<dbReference type="Pfam" id="PF01411">
    <property type="entry name" value="tRNA-synt_2c"/>
    <property type="match status" value="1"/>
</dbReference>
<dbReference type="Pfam" id="PF07973">
    <property type="entry name" value="tRNA_SAD"/>
    <property type="match status" value="1"/>
</dbReference>
<dbReference type="PRINTS" id="PR00980">
    <property type="entry name" value="TRNASYNTHALA"/>
</dbReference>
<dbReference type="SMART" id="SM00863">
    <property type="entry name" value="tRNA_SAD"/>
    <property type="match status" value="1"/>
</dbReference>
<dbReference type="SUPFAM" id="SSF55681">
    <property type="entry name" value="Class II aaRS and biotin synthetases"/>
    <property type="match status" value="1"/>
</dbReference>
<dbReference type="SUPFAM" id="SSF101353">
    <property type="entry name" value="Putative anticodon-binding domain of alanyl-tRNA synthetase (AlaRS)"/>
    <property type="match status" value="1"/>
</dbReference>
<dbReference type="SUPFAM" id="SSF55186">
    <property type="entry name" value="ThrRS/AlaRS common domain"/>
    <property type="match status" value="1"/>
</dbReference>
<dbReference type="SUPFAM" id="SSF50447">
    <property type="entry name" value="Translation proteins"/>
    <property type="match status" value="1"/>
</dbReference>
<dbReference type="PROSITE" id="PS50860">
    <property type="entry name" value="AA_TRNA_LIGASE_II_ALA"/>
    <property type="match status" value="1"/>
</dbReference>
<comment type="function">
    <text evidence="1">Catalyzes the attachment of alanine to tRNA(Ala) in a two-step reaction: alanine is first activated by ATP to form Ala-AMP and then transferred to the acceptor end of tRNA(Ala). Also edits incorrectly charged Ser-tRNA(Ala) and Gly-tRNA(Ala) via its editing domain.</text>
</comment>
<comment type="catalytic activity">
    <reaction evidence="1">
        <text>tRNA(Ala) + L-alanine + ATP = L-alanyl-tRNA(Ala) + AMP + diphosphate</text>
        <dbReference type="Rhea" id="RHEA:12540"/>
        <dbReference type="Rhea" id="RHEA-COMP:9657"/>
        <dbReference type="Rhea" id="RHEA-COMP:9923"/>
        <dbReference type="ChEBI" id="CHEBI:30616"/>
        <dbReference type="ChEBI" id="CHEBI:33019"/>
        <dbReference type="ChEBI" id="CHEBI:57972"/>
        <dbReference type="ChEBI" id="CHEBI:78442"/>
        <dbReference type="ChEBI" id="CHEBI:78497"/>
        <dbReference type="ChEBI" id="CHEBI:456215"/>
        <dbReference type="EC" id="6.1.1.7"/>
    </reaction>
</comment>
<comment type="cofactor">
    <cofactor evidence="1">
        <name>Zn(2+)</name>
        <dbReference type="ChEBI" id="CHEBI:29105"/>
    </cofactor>
    <text evidence="1">Binds 1 zinc ion per subunit.</text>
</comment>
<comment type="subunit">
    <text evidence="1">Homotetramer.</text>
</comment>
<comment type="subcellular location">
    <subcellularLocation>
        <location evidence="1">Cytoplasm</location>
    </subcellularLocation>
</comment>
<comment type="domain">
    <text evidence="1">Consists of three domains; the N-terminal catalytic domain, the editing domain and the C-terminal C-Ala domain. The editing domain removes incorrectly charged amino acids, while the C-Ala domain, along with tRNA(Ala), serves as a bridge to cooperatively bring together the editing and aminoacylation centers thus stimulating deacylation of misacylated tRNAs.</text>
</comment>
<comment type="similarity">
    <text evidence="1">Belongs to the class-II aminoacyl-tRNA synthetase family.</text>
</comment>
<proteinExistence type="inferred from homology"/>
<accession>Q57KU6</accession>
<gene>
    <name evidence="1" type="primary">alaS</name>
    <name type="ordered locus">SCH_2760</name>
</gene>
<keyword id="KW-0030">Aminoacyl-tRNA synthetase</keyword>
<keyword id="KW-0067">ATP-binding</keyword>
<keyword id="KW-0963">Cytoplasm</keyword>
<keyword id="KW-0436">Ligase</keyword>
<keyword id="KW-0479">Metal-binding</keyword>
<keyword id="KW-0547">Nucleotide-binding</keyword>
<keyword id="KW-0648">Protein biosynthesis</keyword>
<keyword id="KW-0694">RNA-binding</keyword>
<keyword id="KW-0820">tRNA-binding</keyword>
<keyword id="KW-0862">Zinc</keyword>
<feature type="chain" id="PRO_0000075194" description="Alanine--tRNA ligase">
    <location>
        <begin position="1"/>
        <end position="876"/>
    </location>
</feature>
<feature type="binding site" evidence="1">
    <location>
        <position position="564"/>
    </location>
    <ligand>
        <name>Zn(2+)</name>
        <dbReference type="ChEBI" id="CHEBI:29105"/>
    </ligand>
</feature>
<feature type="binding site" evidence="1">
    <location>
        <position position="568"/>
    </location>
    <ligand>
        <name>Zn(2+)</name>
        <dbReference type="ChEBI" id="CHEBI:29105"/>
    </ligand>
</feature>
<feature type="binding site" evidence="1">
    <location>
        <position position="666"/>
    </location>
    <ligand>
        <name>Zn(2+)</name>
        <dbReference type="ChEBI" id="CHEBI:29105"/>
    </ligand>
</feature>
<feature type="binding site" evidence="1">
    <location>
        <position position="670"/>
    </location>
    <ligand>
        <name>Zn(2+)</name>
        <dbReference type="ChEBI" id="CHEBI:29105"/>
    </ligand>
</feature>